<gene>
    <name evidence="1" type="primary">fabA</name>
    <name type="ordered locus">CJA_0750</name>
</gene>
<comment type="function">
    <text evidence="1">Necessary for the introduction of cis unsaturation into fatty acids. Catalyzes the dehydration of (3R)-3-hydroxydecanoyl-ACP to E-(2)-decenoyl-ACP and then its isomerization to Z-(3)-decenoyl-ACP. Can catalyze the dehydratase reaction for beta-hydroxyacyl-ACPs with saturated chain lengths up to 16:0, being most active on intermediate chain length.</text>
</comment>
<comment type="catalytic activity">
    <reaction evidence="1">
        <text>a (3R)-hydroxyacyl-[ACP] = a (2E)-enoyl-[ACP] + H2O</text>
        <dbReference type="Rhea" id="RHEA:13097"/>
        <dbReference type="Rhea" id="RHEA-COMP:9925"/>
        <dbReference type="Rhea" id="RHEA-COMP:9945"/>
        <dbReference type="ChEBI" id="CHEBI:15377"/>
        <dbReference type="ChEBI" id="CHEBI:78784"/>
        <dbReference type="ChEBI" id="CHEBI:78827"/>
        <dbReference type="EC" id="4.2.1.59"/>
    </reaction>
</comment>
<comment type="catalytic activity">
    <reaction evidence="1">
        <text>(3R)-hydroxydecanoyl-[ACP] = (2E)-decenoyl-[ACP] + H2O</text>
        <dbReference type="Rhea" id="RHEA:41860"/>
        <dbReference type="Rhea" id="RHEA-COMP:9638"/>
        <dbReference type="Rhea" id="RHEA-COMP:9639"/>
        <dbReference type="ChEBI" id="CHEBI:15377"/>
        <dbReference type="ChEBI" id="CHEBI:78466"/>
        <dbReference type="ChEBI" id="CHEBI:78467"/>
    </reaction>
</comment>
<comment type="catalytic activity">
    <reaction evidence="1">
        <text>(2E)-decenoyl-[ACP] = (3Z)-decenoyl-[ACP]</text>
        <dbReference type="Rhea" id="RHEA:23568"/>
        <dbReference type="Rhea" id="RHEA-COMP:9639"/>
        <dbReference type="Rhea" id="RHEA-COMP:9927"/>
        <dbReference type="ChEBI" id="CHEBI:78467"/>
        <dbReference type="ChEBI" id="CHEBI:78798"/>
        <dbReference type="EC" id="5.3.3.14"/>
    </reaction>
</comment>
<comment type="pathway">
    <text evidence="1">Lipid metabolism; fatty acid biosynthesis.</text>
</comment>
<comment type="subunit">
    <text evidence="1">Homodimer.</text>
</comment>
<comment type="subcellular location">
    <subcellularLocation>
        <location evidence="1">Cytoplasm</location>
    </subcellularLocation>
</comment>
<comment type="similarity">
    <text evidence="1">Belongs to the thioester dehydratase family. FabA subfamily.</text>
</comment>
<dbReference type="EC" id="4.2.1.59" evidence="1"/>
<dbReference type="EC" id="5.3.3.14" evidence="1"/>
<dbReference type="EMBL" id="CP000934">
    <property type="protein sequence ID" value="ACE84919.1"/>
    <property type="molecule type" value="Genomic_DNA"/>
</dbReference>
<dbReference type="RefSeq" id="WP_012486413.1">
    <property type="nucleotide sequence ID" value="NC_010995.1"/>
</dbReference>
<dbReference type="SMR" id="B3PK88"/>
<dbReference type="STRING" id="498211.CJA_0750"/>
<dbReference type="KEGG" id="cja:CJA_0750"/>
<dbReference type="eggNOG" id="COG0764">
    <property type="taxonomic scope" value="Bacteria"/>
</dbReference>
<dbReference type="HOGENOM" id="CLU_097925_0_0_6"/>
<dbReference type="OrthoDB" id="9786735at2"/>
<dbReference type="UniPathway" id="UPA00094"/>
<dbReference type="Proteomes" id="UP000001036">
    <property type="component" value="Chromosome"/>
</dbReference>
<dbReference type="GO" id="GO:0005737">
    <property type="term" value="C:cytoplasm"/>
    <property type="evidence" value="ECO:0007669"/>
    <property type="project" value="UniProtKB-SubCell"/>
</dbReference>
<dbReference type="GO" id="GO:0019171">
    <property type="term" value="F:(3R)-hydroxyacyl-[acyl-carrier-protein] dehydratase activity"/>
    <property type="evidence" value="ECO:0007669"/>
    <property type="project" value="UniProtKB-UniRule"/>
</dbReference>
<dbReference type="GO" id="GO:0034017">
    <property type="term" value="F:trans-2-decenoyl-acyl-carrier-protein isomerase activity"/>
    <property type="evidence" value="ECO:0007669"/>
    <property type="project" value="UniProtKB-UniRule"/>
</dbReference>
<dbReference type="GO" id="GO:0006636">
    <property type="term" value="P:unsaturated fatty acid biosynthetic process"/>
    <property type="evidence" value="ECO:0007669"/>
    <property type="project" value="UniProtKB-UniRule"/>
</dbReference>
<dbReference type="CDD" id="cd01287">
    <property type="entry name" value="FabA"/>
    <property type="match status" value="1"/>
</dbReference>
<dbReference type="Gene3D" id="3.10.129.10">
    <property type="entry name" value="Hotdog Thioesterase"/>
    <property type="match status" value="1"/>
</dbReference>
<dbReference type="HAMAP" id="MF_00405">
    <property type="entry name" value="FabA"/>
    <property type="match status" value="1"/>
</dbReference>
<dbReference type="InterPro" id="IPR010083">
    <property type="entry name" value="FabA"/>
</dbReference>
<dbReference type="InterPro" id="IPR013114">
    <property type="entry name" value="FabA_FabZ"/>
</dbReference>
<dbReference type="InterPro" id="IPR029069">
    <property type="entry name" value="HotDog_dom_sf"/>
</dbReference>
<dbReference type="NCBIfam" id="TIGR01749">
    <property type="entry name" value="fabA"/>
    <property type="match status" value="1"/>
</dbReference>
<dbReference type="NCBIfam" id="NF003509">
    <property type="entry name" value="PRK05174.1"/>
    <property type="match status" value="1"/>
</dbReference>
<dbReference type="PANTHER" id="PTHR30272">
    <property type="entry name" value="3-HYDROXYACYL-[ACYL-CARRIER-PROTEIN] DEHYDRATASE"/>
    <property type="match status" value="1"/>
</dbReference>
<dbReference type="PANTHER" id="PTHR30272:SF8">
    <property type="entry name" value="3-HYDROXYDECANOYL-[ACYL-CARRIER-PROTEIN] DEHYDRATASE"/>
    <property type="match status" value="1"/>
</dbReference>
<dbReference type="Pfam" id="PF07977">
    <property type="entry name" value="FabA"/>
    <property type="match status" value="1"/>
</dbReference>
<dbReference type="SUPFAM" id="SSF54637">
    <property type="entry name" value="Thioesterase/thiol ester dehydrase-isomerase"/>
    <property type="match status" value="1"/>
</dbReference>
<sequence>MTSFQPQSSYSRDDLIECGKGNLFGPGNAQLPLPNMLMLDRITHISHTGGEFGKGEIIAELDISPDLWFFECHFPGDPVMPGCLGLDAMWQLVGFFLGWKGNLGRGRALGCGELKFTGQILPTAKKITYHIHLKRVIERKLIMGIADGRVSCDGKDIYFAHDLRVGLFQNTDSF</sequence>
<reference key="1">
    <citation type="journal article" date="2008" name="J. Bacteriol.">
        <title>Insights into plant cell wall degradation from the genome sequence of the soil bacterium Cellvibrio japonicus.</title>
        <authorList>
            <person name="DeBoy R.T."/>
            <person name="Mongodin E.F."/>
            <person name="Fouts D.E."/>
            <person name="Tailford L.E."/>
            <person name="Khouri H."/>
            <person name="Emerson J.B."/>
            <person name="Mohamoud Y."/>
            <person name="Watkins K."/>
            <person name="Henrissat B."/>
            <person name="Gilbert H.J."/>
            <person name="Nelson K.E."/>
        </authorList>
    </citation>
    <scope>NUCLEOTIDE SEQUENCE [LARGE SCALE GENOMIC DNA]</scope>
    <source>
        <strain>Ueda107</strain>
    </source>
</reference>
<proteinExistence type="inferred from homology"/>
<feature type="chain" id="PRO_1000201175" description="3-hydroxydecanoyl-[acyl-carrier-protein] dehydratase">
    <location>
        <begin position="1"/>
        <end position="174"/>
    </location>
</feature>
<feature type="active site" evidence="1">
    <location>
        <position position="73"/>
    </location>
</feature>
<name>FABA_CELJU</name>
<keyword id="KW-0963">Cytoplasm</keyword>
<keyword id="KW-0275">Fatty acid biosynthesis</keyword>
<keyword id="KW-0276">Fatty acid metabolism</keyword>
<keyword id="KW-0413">Isomerase</keyword>
<keyword id="KW-0444">Lipid biosynthesis</keyword>
<keyword id="KW-0443">Lipid metabolism</keyword>
<keyword id="KW-0456">Lyase</keyword>
<keyword id="KW-1185">Reference proteome</keyword>
<accession>B3PK88</accession>
<protein>
    <recommendedName>
        <fullName evidence="1">3-hydroxydecanoyl-[acyl-carrier-protein] dehydratase</fullName>
        <ecNumber evidence="1">4.2.1.59</ecNumber>
    </recommendedName>
    <alternativeName>
        <fullName evidence="1">3-hydroxyacyl-[acyl-carrier-protein] dehydratase FabA</fullName>
    </alternativeName>
    <alternativeName>
        <fullName evidence="1">Beta-hydroxydecanoyl thioester dehydrase</fullName>
    </alternativeName>
    <alternativeName>
        <fullName evidence="1">Trans-2-decenoyl-[acyl-carrier-protein] isomerase</fullName>
        <ecNumber evidence="1">5.3.3.14</ecNumber>
    </alternativeName>
</protein>
<organism>
    <name type="scientific">Cellvibrio japonicus (strain Ueda107)</name>
    <name type="common">Pseudomonas fluorescens subsp. cellulosa</name>
    <dbReference type="NCBI Taxonomy" id="498211"/>
    <lineage>
        <taxon>Bacteria</taxon>
        <taxon>Pseudomonadati</taxon>
        <taxon>Pseudomonadota</taxon>
        <taxon>Gammaproteobacteria</taxon>
        <taxon>Cellvibrionales</taxon>
        <taxon>Cellvibrionaceae</taxon>
        <taxon>Cellvibrio</taxon>
    </lineage>
</organism>
<evidence type="ECO:0000255" key="1">
    <source>
        <dbReference type="HAMAP-Rule" id="MF_00405"/>
    </source>
</evidence>